<proteinExistence type="evidence at protein level"/>
<evidence type="ECO:0000269" key="1">
    <source ref="2"/>
</evidence>
<evidence type="ECO:0000303" key="2">
    <source ref="2"/>
</evidence>
<evidence type="ECO:0000305" key="3"/>
<name>CASPD_HPVKA</name>
<keyword id="KW-0007">Acetylation</keyword>
<keyword id="KW-0167">Capsid protein</keyword>
<keyword id="KW-0903">Direct protein sequencing</keyword>
<keyword id="KW-0946">Virion</keyword>
<comment type="subcellular location">
    <subcellularLocation>
        <location evidence="3">Virion</location>
    </subcellularLocation>
</comment>
<comment type="similarity">
    <text evidence="3">Belongs to the high plain virus capsid family.</text>
</comment>
<organism>
    <name type="scientific">High plains virus (isolate Kansas 2004)</name>
    <dbReference type="NCBI Taxonomy" id="478099"/>
    <lineage>
        <taxon>Viruses</taxon>
        <taxon>Riboviria</taxon>
        <taxon>dsRNA viruses</taxon>
        <taxon>High Plains virus</taxon>
    </lineage>
</organism>
<accession>P85309</accession>
<accession>Q27YF4</accession>
<feature type="initiator methionine" description="Removed" evidence="1">
    <location>
        <position position="1"/>
    </location>
</feature>
<feature type="chain" id="PRO_0000347261" description="Capsid protein">
    <location>
        <begin position="2"/>
        <end position="288"/>
    </location>
</feature>
<feature type="modified residue" description="N-acetylalanine; by host" evidence="1">
    <location>
        <position position="2"/>
    </location>
</feature>
<feature type="sequence variant" description="In strain: Isolate Kansas 2004.">
    <original>E</original>
    <variation>A</variation>
    <location>
        <position position="212"/>
    </location>
</feature>
<organismHost>
    <name type="scientific">Hordeum vulgare</name>
    <name type="common">Barley</name>
    <dbReference type="NCBI Taxonomy" id="4513"/>
</organismHost>
<organismHost>
    <name type="scientific">Triticum aestivum</name>
    <name type="common">Wheat</name>
    <dbReference type="NCBI Taxonomy" id="4565"/>
</organismHost>
<organismHost>
    <name type="scientific">Zea mays</name>
    <name type="common">Maize</name>
    <dbReference type="NCBI Taxonomy" id="4577"/>
</organismHost>
<dbReference type="EMBL" id="DQ324466">
    <property type="protein sequence ID" value="ABC58222.1"/>
    <property type="molecule type" value="Genomic_RNA"/>
</dbReference>
<dbReference type="SMR" id="P85309"/>
<dbReference type="GO" id="GO:0019028">
    <property type="term" value="C:viral capsid"/>
    <property type="evidence" value="ECO:0007669"/>
    <property type="project" value="UniProtKB-KW"/>
</dbReference>
<reference key="1">
    <citation type="journal article" date="2006" name="Virology">
        <title>A new eriophyid mite-borne membrane-enveloped virus-like complex isolated from plants.</title>
        <authorList>
            <person name="Skare J.M."/>
            <person name="Wijkamp I."/>
            <person name="Denham I."/>
            <person name="Rezende J.A."/>
            <person name="Kitajima E.W."/>
            <person name="Park J.W."/>
            <person name="Desvoyes B."/>
            <person name="Rush C.M."/>
            <person name="Michels G."/>
            <person name="Scholthof K.B."/>
            <person name="Scholthof H.B."/>
        </authorList>
    </citation>
    <scope>NUCLEOTIDE SEQUENCE [GENOMIC RNA]</scope>
    <source>
        <strain>Isolate Maize red stripe virus</strain>
    </source>
</reference>
<reference evidence="3" key="2">
    <citation type="submission" date="2007-10" db="UniProtKB">
        <title>Identification of variants of the high plains virus infecting wheat in Kansas.</title>
        <authorList>
            <person name="Seifers D.L."/>
            <person name="Martin T.J."/>
            <person name="Harvey T.L."/>
            <person name="Haber S."/>
            <person name="Krokhin O.V."/>
            <person name="Ying S."/>
            <person name="Standing K.G."/>
        </authorList>
    </citation>
    <scope>PROTEIN SEQUENCE OF 2-78 AND 87-288</scope>
    <scope>ACETYLATION AT ALA-2</scope>
    <source>
        <strain>Isolate Kansas 2004</strain>
    </source>
</reference>
<protein>
    <recommendedName>
        <fullName>Capsid protein</fullName>
    </recommendedName>
    <alternativeName>
        <fullName evidence="2">Coat protein</fullName>
    </alternativeName>
</protein>
<sequence>MALSFKNSSGSIKAKRIKDGLVNANDIETTVIDFSYEKPDLSSVDGFSLKSLLSSDGWHIVVAYQCVTNSEQLNNNKKNNKTQKFRLFTFDIIVIPGLKPNKSKNVVSYNRFMALCIGMICYHKKWKVFNWTRKSYEDNTSTIDFNEDEDFMNKLAMSAGFSKEHKYHWFYSTGFEYTFDIFPAEVIAMSLFRWSHRVELKIKYTHESDLVEPMVRQLTKKGTISDVMDIIGKSTIAKRYEEIVKDRSSTGIGTKYNDVLDEFKEIIKKINSSSLDSTIKDCLKDIEE</sequence>